<dbReference type="EC" id="2.7.11.1"/>
<dbReference type="EMBL" id="AK122985">
    <property type="protein sequence ID" value="BAG53833.1"/>
    <property type="molecule type" value="mRNA"/>
</dbReference>
<dbReference type="EMBL" id="AC106800">
    <property type="status" value="NOT_ANNOTATED_CDS"/>
    <property type="molecule type" value="Genomic_DNA"/>
</dbReference>
<dbReference type="EMBL" id="AC114947">
    <property type="status" value="NOT_ANNOTATED_CDS"/>
    <property type="molecule type" value="Genomic_DNA"/>
</dbReference>
<dbReference type="EMBL" id="CH471119">
    <property type="protein sequence ID" value="EAW56053.1"/>
    <property type="molecule type" value="Genomic_DNA"/>
</dbReference>
<dbReference type="EMBL" id="BC036422">
    <property type="protein sequence ID" value="AAH36422.1"/>
    <property type="molecule type" value="mRNA"/>
</dbReference>
<dbReference type="CCDS" id="CCDS3943.1"/>
<dbReference type="RefSeq" id="NP_699192.1">
    <property type="nucleotide sequence ID" value="NM_153361.4"/>
</dbReference>
<dbReference type="RefSeq" id="XP_006714513.1">
    <property type="nucleotide sequence ID" value="XM_006714450.1"/>
</dbReference>
<dbReference type="SMR" id="Q8IY84"/>
<dbReference type="BioGRID" id="127945">
    <property type="interactions" value="9"/>
</dbReference>
<dbReference type="CORUM" id="Q8IY84"/>
<dbReference type="FunCoup" id="Q8IY84">
    <property type="interactions" value="522"/>
</dbReference>
<dbReference type="IntAct" id="Q8IY84">
    <property type="interactions" value="6"/>
</dbReference>
<dbReference type="STRING" id="9606.ENSP00000420849"/>
<dbReference type="BindingDB" id="Q8IY84"/>
<dbReference type="ChEMBL" id="CHEMBL3542"/>
<dbReference type="DrugBank" id="DB12010">
    <property type="generic name" value="Fostamatinib"/>
</dbReference>
<dbReference type="DrugCentral" id="Q8IY84"/>
<dbReference type="GuidetoPHARMACOLOGY" id="2291"/>
<dbReference type="GlyGen" id="Q8IY84">
    <property type="glycosylation" value="2 sites, 1 O-linked glycan (1 site)"/>
</dbReference>
<dbReference type="iPTMnet" id="Q8IY84"/>
<dbReference type="PhosphoSitePlus" id="Q8IY84"/>
<dbReference type="BioMuta" id="NIM1K"/>
<dbReference type="DMDM" id="74759697"/>
<dbReference type="jPOST" id="Q8IY84"/>
<dbReference type="MassIVE" id="Q8IY84"/>
<dbReference type="PaxDb" id="9606-ENSP00000420849"/>
<dbReference type="PeptideAtlas" id="Q8IY84"/>
<dbReference type="ProteomicsDB" id="71124"/>
<dbReference type="Antibodypedia" id="23239">
    <property type="antibodies" value="152 antibodies from 24 providers"/>
</dbReference>
<dbReference type="DNASU" id="167359"/>
<dbReference type="Ensembl" id="ENST00000326035.6">
    <property type="protein sequence ID" value="ENSP00000313572.2"/>
    <property type="gene ID" value="ENSG00000177453.7"/>
</dbReference>
<dbReference type="Ensembl" id="ENST00000512796.1">
    <property type="protein sequence ID" value="ENSP00000420849.1"/>
    <property type="gene ID" value="ENSG00000177453.7"/>
</dbReference>
<dbReference type="GeneID" id="167359"/>
<dbReference type="KEGG" id="hsa:167359"/>
<dbReference type="MANE-Select" id="ENST00000326035.6">
    <property type="protein sequence ID" value="ENSP00000313572.2"/>
    <property type="RefSeq nucleotide sequence ID" value="NM_153361.4"/>
    <property type="RefSeq protein sequence ID" value="NP_699192.1"/>
</dbReference>
<dbReference type="UCSC" id="uc003jno.5">
    <property type="organism name" value="human"/>
</dbReference>
<dbReference type="AGR" id="HGNC:28646"/>
<dbReference type="CTD" id="167359"/>
<dbReference type="DisGeNET" id="167359"/>
<dbReference type="GeneCards" id="NIM1K"/>
<dbReference type="HGNC" id="HGNC:28646">
    <property type="gene designation" value="NIM1K"/>
</dbReference>
<dbReference type="HPA" id="ENSG00000177453">
    <property type="expression patterns" value="Group enriched (brain, choroid plexus, pituitary gland, retina)"/>
</dbReference>
<dbReference type="neXtProt" id="NX_Q8IY84"/>
<dbReference type="OpenTargets" id="ENSG00000177453"/>
<dbReference type="VEuPathDB" id="HostDB:ENSG00000177453"/>
<dbReference type="eggNOG" id="KOG0583">
    <property type="taxonomic scope" value="Eukaryota"/>
</dbReference>
<dbReference type="GeneTree" id="ENSGT00940000160020"/>
<dbReference type="HOGENOM" id="CLU_000288_63_1_1"/>
<dbReference type="InParanoid" id="Q8IY84"/>
<dbReference type="OMA" id="IMSNEWM"/>
<dbReference type="OrthoDB" id="193931at2759"/>
<dbReference type="PAN-GO" id="Q8IY84">
    <property type="GO annotations" value="4 GO annotations based on evolutionary models"/>
</dbReference>
<dbReference type="PhylomeDB" id="Q8IY84"/>
<dbReference type="PathwayCommons" id="Q8IY84"/>
<dbReference type="SignaLink" id="Q8IY84"/>
<dbReference type="BioGRID-ORCS" id="167359">
    <property type="hits" value="9 hits in 1128 CRISPR screens"/>
</dbReference>
<dbReference type="ChiTaRS" id="NIM1K">
    <property type="organism name" value="human"/>
</dbReference>
<dbReference type="GenomeRNAi" id="167359"/>
<dbReference type="Pharos" id="Q8IY84">
    <property type="development level" value="Tchem"/>
</dbReference>
<dbReference type="PRO" id="PR:Q8IY84"/>
<dbReference type="Proteomes" id="UP000005640">
    <property type="component" value="Chromosome 5"/>
</dbReference>
<dbReference type="RNAct" id="Q8IY84">
    <property type="molecule type" value="protein"/>
</dbReference>
<dbReference type="Bgee" id="ENSG00000177453">
    <property type="expression patterns" value="Expressed in middle temporal gyrus and 127 other cell types or tissues"/>
</dbReference>
<dbReference type="GO" id="GO:0005524">
    <property type="term" value="F:ATP binding"/>
    <property type="evidence" value="ECO:0000314"/>
    <property type="project" value="UniProtKB"/>
</dbReference>
<dbReference type="GO" id="GO:0000287">
    <property type="term" value="F:magnesium ion binding"/>
    <property type="evidence" value="ECO:0000314"/>
    <property type="project" value="UniProtKB"/>
</dbReference>
<dbReference type="GO" id="GO:0106310">
    <property type="term" value="F:protein serine kinase activity"/>
    <property type="evidence" value="ECO:0007669"/>
    <property type="project" value="RHEA"/>
</dbReference>
<dbReference type="GO" id="GO:0004674">
    <property type="term" value="F:protein serine/threonine kinase activity"/>
    <property type="evidence" value="ECO:0000314"/>
    <property type="project" value="UniProtKB"/>
</dbReference>
<dbReference type="GO" id="GO:0035556">
    <property type="term" value="P:intracellular signal transduction"/>
    <property type="evidence" value="ECO:0000318"/>
    <property type="project" value="GO_Central"/>
</dbReference>
<dbReference type="GO" id="GO:0006468">
    <property type="term" value="P:protein phosphorylation"/>
    <property type="evidence" value="ECO:0000314"/>
    <property type="project" value="UniProtKB"/>
</dbReference>
<dbReference type="CDD" id="cd14075">
    <property type="entry name" value="STKc_NIM1"/>
    <property type="match status" value="1"/>
</dbReference>
<dbReference type="FunFam" id="3.30.200.20:FF:000003">
    <property type="entry name" value="Non-specific serine/threonine protein kinase"/>
    <property type="match status" value="1"/>
</dbReference>
<dbReference type="FunFam" id="1.10.510.10:FF:000346">
    <property type="entry name" value="Serine/threonine-protein kinase NIM1"/>
    <property type="match status" value="1"/>
</dbReference>
<dbReference type="Gene3D" id="1.10.510.10">
    <property type="entry name" value="Transferase(Phosphotransferase) domain 1"/>
    <property type="match status" value="1"/>
</dbReference>
<dbReference type="InterPro" id="IPR011009">
    <property type="entry name" value="Kinase-like_dom_sf"/>
</dbReference>
<dbReference type="InterPro" id="IPR049571">
    <property type="entry name" value="NIM1K_STKc"/>
</dbReference>
<dbReference type="InterPro" id="IPR000719">
    <property type="entry name" value="Prot_kinase_dom"/>
</dbReference>
<dbReference type="InterPro" id="IPR017441">
    <property type="entry name" value="Protein_kinase_ATP_BS"/>
</dbReference>
<dbReference type="InterPro" id="IPR008271">
    <property type="entry name" value="Ser/Thr_kinase_AS"/>
</dbReference>
<dbReference type="PANTHER" id="PTHR24346">
    <property type="entry name" value="MAP/MICROTUBULE AFFINITY-REGULATING KINASE"/>
    <property type="match status" value="1"/>
</dbReference>
<dbReference type="PANTHER" id="PTHR24346:SF49">
    <property type="entry name" value="NIM1 SERINE_THREONINE PROTEIN KINASE"/>
    <property type="match status" value="1"/>
</dbReference>
<dbReference type="Pfam" id="PF00069">
    <property type="entry name" value="Pkinase"/>
    <property type="match status" value="1"/>
</dbReference>
<dbReference type="SMART" id="SM00220">
    <property type="entry name" value="S_TKc"/>
    <property type="match status" value="1"/>
</dbReference>
<dbReference type="SUPFAM" id="SSF56112">
    <property type="entry name" value="Protein kinase-like (PK-like)"/>
    <property type="match status" value="1"/>
</dbReference>
<dbReference type="PROSITE" id="PS00107">
    <property type="entry name" value="PROTEIN_KINASE_ATP"/>
    <property type="match status" value="1"/>
</dbReference>
<dbReference type="PROSITE" id="PS50011">
    <property type="entry name" value="PROTEIN_KINASE_DOM"/>
    <property type="match status" value="1"/>
</dbReference>
<dbReference type="PROSITE" id="PS00108">
    <property type="entry name" value="PROTEIN_KINASE_ST"/>
    <property type="match status" value="1"/>
</dbReference>
<protein>
    <recommendedName>
        <fullName>Serine/threonine-protein kinase NIM1</fullName>
        <ecNumber>2.7.11.1</ecNumber>
    </recommendedName>
    <alternativeName>
        <fullName>NIM1 serine/threonine-protein kinase</fullName>
    </alternativeName>
</protein>
<keyword id="KW-0067">ATP-binding</keyword>
<keyword id="KW-0418">Kinase</keyword>
<keyword id="KW-0460">Magnesium</keyword>
<keyword id="KW-0479">Metal-binding</keyword>
<keyword id="KW-0547">Nucleotide-binding</keyword>
<keyword id="KW-0597">Phosphoprotein</keyword>
<keyword id="KW-1267">Proteomics identification</keyword>
<keyword id="KW-1185">Reference proteome</keyword>
<keyword id="KW-0723">Serine/threonine-protein kinase</keyword>
<keyword id="KW-0808">Transferase</keyword>
<gene>
    <name type="primary">NIM1K</name>
    <name type="synonym">NIM1</name>
</gene>
<evidence type="ECO:0000250" key="1">
    <source>
        <dbReference type="UniProtKB" id="P28523"/>
    </source>
</evidence>
<evidence type="ECO:0000255" key="2">
    <source>
        <dbReference type="PROSITE-ProRule" id="PRU00159"/>
    </source>
</evidence>
<evidence type="ECO:0000255" key="3">
    <source>
        <dbReference type="PROSITE-ProRule" id="PRU10027"/>
    </source>
</evidence>
<evidence type="ECO:0000256" key="4">
    <source>
        <dbReference type="SAM" id="MobiDB-lite"/>
    </source>
</evidence>
<evidence type="ECO:0000269" key="5">
    <source>
    </source>
</evidence>
<evidence type="ECO:0000269" key="6">
    <source>
    </source>
</evidence>
<evidence type="ECO:0000305" key="7"/>
<evidence type="ECO:0000312" key="8">
    <source>
        <dbReference type="EMBL" id="AAH36422.1"/>
    </source>
</evidence>
<comment type="catalytic activity">
    <reaction evidence="5">
        <text>L-seryl-[protein] + ATP = O-phospho-L-seryl-[protein] + ADP + H(+)</text>
        <dbReference type="Rhea" id="RHEA:17989"/>
        <dbReference type="Rhea" id="RHEA-COMP:9863"/>
        <dbReference type="Rhea" id="RHEA-COMP:11604"/>
        <dbReference type="ChEBI" id="CHEBI:15378"/>
        <dbReference type="ChEBI" id="CHEBI:29999"/>
        <dbReference type="ChEBI" id="CHEBI:30616"/>
        <dbReference type="ChEBI" id="CHEBI:83421"/>
        <dbReference type="ChEBI" id="CHEBI:456216"/>
        <dbReference type="EC" id="2.7.11.1"/>
    </reaction>
</comment>
<comment type="catalytic activity">
    <reaction evidence="5">
        <text>L-threonyl-[protein] + ATP = O-phospho-L-threonyl-[protein] + ADP + H(+)</text>
        <dbReference type="Rhea" id="RHEA:46608"/>
        <dbReference type="Rhea" id="RHEA-COMP:11060"/>
        <dbReference type="Rhea" id="RHEA-COMP:11605"/>
        <dbReference type="ChEBI" id="CHEBI:15378"/>
        <dbReference type="ChEBI" id="CHEBI:30013"/>
        <dbReference type="ChEBI" id="CHEBI:30616"/>
        <dbReference type="ChEBI" id="CHEBI:61977"/>
        <dbReference type="ChEBI" id="CHEBI:456216"/>
        <dbReference type="EC" id="2.7.11.1"/>
    </reaction>
</comment>
<comment type="cofactor">
    <cofactor evidence="5">
        <name>Mg(2+)</name>
        <dbReference type="ChEBI" id="CHEBI:18420"/>
    </cofactor>
</comment>
<comment type="activity regulation">
    <text evidence="5">Activated by phosphorylation at Thr-229, probably by autophosphorylation.</text>
</comment>
<comment type="similarity">
    <text evidence="7">Belongs to the protein kinase superfamily. CAMK Ser/Thr protein kinase family.</text>
</comment>
<reference evidence="7" key="1">
    <citation type="journal article" date="2005" name="FEBS Lett.">
        <title>Identification of the sucrose non-fermenting related kinase SNRK, as a novel LKB1 substrate.</title>
        <authorList>
            <person name="Jaleel M."/>
            <person name="McBride A."/>
            <person name="Lizcano J.M."/>
            <person name="Deak M."/>
            <person name="Toth R."/>
            <person name="Morrice N.A."/>
            <person name="Alessi D.R."/>
        </authorList>
    </citation>
    <scope>NUCLEOTIDE SEQUENCE [MRNA]</scope>
    <scope>FUNCTION</scope>
    <scope>ACTIVITY REGULATION</scope>
    <scope>PHOSPHORYLATION AT THR-229</scope>
    <scope>MUTAGENESIS OF THR-229</scope>
</reference>
<reference key="2">
    <citation type="journal article" date="2004" name="Nat. Genet.">
        <title>Complete sequencing and characterization of 21,243 full-length human cDNAs.</title>
        <authorList>
            <person name="Ota T."/>
            <person name="Suzuki Y."/>
            <person name="Nishikawa T."/>
            <person name="Otsuki T."/>
            <person name="Sugiyama T."/>
            <person name="Irie R."/>
            <person name="Wakamatsu A."/>
            <person name="Hayashi K."/>
            <person name="Sato H."/>
            <person name="Nagai K."/>
            <person name="Kimura K."/>
            <person name="Makita H."/>
            <person name="Sekine M."/>
            <person name="Obayashi M."/>
            <person name="Nishi T."/>
            <person name="Shibahara T."/>
            <person name="Tanaka T."/>
            <person name="Ishii S."/>
            <person name="Yamamoto J."/>
            <person name="Saito K."/>
            <person name="Kawai Y."/>
            <person name="Isono Y."/>
            <person name="Nakamura Y."/>
            <person name="Nagahari K."/>
            <person name="Murakami K."/>
            <person name="Yasuda T."/>
            <person name="Iwayanagi T."/>
            <person name="Wagatsuma M."/>
            <person name="Shiratori A."/>
            <person name="Sudo H."/>
            <person name="Hosoiri T."/>
            <person name="Kaku Y."/>
            <person name="Kodaira H."/>
            <person name="Kondo H."/>
            <person name="Sugawara M."/>
            <person name="Takahashi M."/>
            <person name="Kanda K."/>
            <person name="Yokoi T."/>
            <person name="Furuya T."/>
            <person name="Kikkawa E."/>
            <person name="Omura Y."/>
            <person name="Abe K."/>
            <person name="Kamihara K."/>
            <person name="Katsuta N."/>
            <person name="Sato K."/>
            <person name="Tanikawa M."/>
            <person name="Yamazaki M."/>
            <person name="Ninomiya K."/>
            <person name="Ishibashi T."/>
            <person name="Yamashita H."/>
            <person name="Murakawa K."/>
            <person name="Fujimori K."/>
            <person name="Tanai H."/>
            <person name="Kimata M."/>
            <person name="Watanabe M."/>
            <person name="Hiraoka S."/>
            <person name="Chiba Y."/>
            <person name="Ishida S."/>
            <person name="Ono Y."/>
            <person name="Takiguchi S."/>
            <person name="Watanabe S."/>
            <person name="Yosida M."/>
            <person name="Hotuta T."/>
            <person name="Kusano J."/>
            <person name="Kanehori K."/>
            <person name="Takahashi-Fujii A."/>
            <person name="Hara H."/>
            <person name="Tanase T.-O."/>
            <person name="Nomura Y."/>
            <person name="Togiya S."/>
            <person name="Komai F."/>
            <person name="Hara R."/>
            <person name="Takeuchi K."/>
            <person name="Arita M."/>
            <person name="Imose N."/>
            <person name="Musashino K."/>
            <person name="Yuuki H."/>
            <person name="Oshima A."/>
            <person name="Sasaki N."/>
            <person name="Aotsuka S."/>
            <person name="Yoshikawa Y."/>
            <person name="Matsunawa H."/>
            <person name="Ichihara T."/>
            <person name="Shiohata N."/>
            <person name="Sano S."/>
            <person name="Moriya S."/>
            <person name="Momiyama H."/>
            <person name="Satoh N."/>
            <person name="Takami S."/>
            <person name="Terashima Y."/>
            <person name="Suzuki O."/>
            <person name="Nakagawa S."/>
            <person name="Senoh A."/>
            <person name="Mizoguchi H."/>
            <person name="Goto Y."/>
            <person name="Shimizu F."/>
            <person name="Wakebe H."/>
            <person name="Hishigaki H."/>
            <person name="Watanabe T."/>
            <person name="Sugiyama A."/>
            <person name="Takemoto M."/>
            <person name="Kawakami B."/>
            <person name="Yamazaki M."/>
            <person name="Watanabe K."/>
            <person name="Kumagai A."/>
            <person name="Itakura S."/>
            <person name="Fukuzumi Y."/>
            <person name="Fujimori Y."/>
            <person name="Komiyama M."/>
            <person name="Tashiro H."/>
            <person name="Tanigami A."/>
            <person name="Fujiwara T."/>
            <person name="Ono T."/>
            <person name="Yamada K."/>
            <person name="Fujii Y."/>
            <person name="Ozaki K."/>
            <person name="Hirao M."/>
            <person name="Ohmori Y."/>
            <person name="Kawabata A."/>
            <person name="Hikiji T."/>
            <person name="Kobatake N."/>
            <person name="Inagaki H."/>
            <person name="Ikema Y."/>
            <person name="Okamoto S."/>
            <person name="Okitani R."/>
            <person name="Kawakami T."/>
            <person name="Noguchi S."/>
            <person name="Itoh T."/>
            <person name="Shigeta K."/>
            <person name="Senba T."/>
            <person name="Matsumura K."/>
            <person name="Nakajima Y."/>
            <person name="Mizuno T."/>
            <person name="Morinaga M."/>
            <person name="Sasaki M."/>
            <person name="Togashi T."/>
            <person name="Oyama M."/>
            <person name="Hata H."/>
            <person name="Watanabe M."/>
            <person name="Komatsu T."/>
            <person name="Mizushima-Sugano J."/>
            <person name="Satoh T."/>
            <person name="Shirai Y."/>
            <person name="Takahashi Y."/>
            <person name="Nakagawa K."/>
            <person name="Okumura K."/>
            <person name="Nagase T."/>
            <person name="Nomura N."/>
            <person name="Kikuchi H."/>
            <person name="Masuho Y."/>
            <person name="Yamashita R."/>
            <person name="Nakai K."/>
            <person name="Yada T."/>
            <person name="Nakamura Y."/>
            <person name="Ohara O."/>
            <person name="Isogai T."/>
            <person name="Sugano S."/>
        </authorList>
    </citation>
    <scope>NUCLEOTIDE SEQUENCE [LARGE SCALE MRNA]</scope>
    <source>
        <tissue>Amygdala</tissue>
    </source>
</reference>
<reference key="3">
    <citation type="journal article" date="2004" name="Nature">
        <title>The DNA sequence and comparative analysis of human chromosome 5.</title>
        <authorList>
            <person name="Schmutz J."/>
            <person name="Martin J."/>
            <person name="Terry A."/>
            <person name="Couronne O."/>
            <person name="Grimwood J."/>
            <person name="Lowry S."/>
            <person name="Gordon L.A."/>
            <person name="Scott D."/>
            <person name="Xie G."/>
            <person name="Huang W."/>
            <person name="Hellsten U."/>
            <person name="Tran-Gyamfi M."/>
            <person name="She X."/>
            <person name="Prabhakar S."/>
            <person name="Aerts A."/>
            <person name="Altherr M."/>
            <person name="Bajorek E."/>
            <person name="Black S."/>
            <person name="Branscomb E."/>
            <person name="Caoile C."/>
            <person name="Challacombe J.F."/>
            <person name="Chan Y.M."/>
            <person name="Denys M."/>
            <person name="Detter J.C."/>
            <person name="Escobar J."/>
            <person name="Flowers D."/>
            <person name="Fotopulos D."/>
            <person name="Glavina T."/>
            <person name="Gomez M."/>
            <person name="Gonzales E."/>
            <person name="Goodstein D."/>
            <person name="Grigoriev I."/>
            <person name="Groza M."/>
            <person name="Hammon N."/>
            <person name="Hawkins T."/>
            <person name="Haydu L."/>
            <person name="Israni S."/>
            <person name="Jett J."/>
            <person name="Kadner K."/>
            <person name="Kimball H."/>
            <person name="Kobayashi A."/>
            <person name="Lopez F."/>
            <person name="Lou Y."/>
            <person name="Martinez D."/>
            <person name="Medina C."/>
            <person name="Morgan J."/>
            <person name="Nandkeshwar R."/>
            <person name="Noonan J.P."/>
            <person name="Pitluck S."/>
            <person name="Pollard M."/>
            <person name="Predki P."/>
            <person name="Priest J."/>
            <person name="Ramirez L."/>
            <person name="Retterer J."/>
            <person name="Rodriguez A."/>
            <person name="Rogers S."/>
            <person name="Salamov A."/>
            <person name="Salazar A."/>
            <person name="Thayer N."/>
            <person name="Tice H."/>
            <person name="Tsai M."/>
            <person name="Ustaszewska A."/>
            <person name="Vo N."/>
            <person name="Wheeler J."/>
            <person name="Wu K."/>
            <person name="Yang J."/>
            <person name="Dickson M."/>
            <person name="Cheng J.-F."/>
            <person name="Eichler E.E."/>
            <person name="Olsen A."/>
            <person name="Pennacchio L.A."/>
            <person name="Rokhsar D.S."/>
            <person name="Richardson P."/>
            <person name="Lucas S.M."/>
            <person name="Myers R.M."/>
            <person name="Rubin E.M."/>
        </authorList>
    </citation>
    <scope>NUCLEOTIDE SEQUENCE [LARGE SCALE GENOMIC DNA]</scope>
</reference>
<reference key="4">
    <citation type="submission" date="2005-07" db="EMBL/GenBank/DDBJ databases">
        <authorList>
            <person name="Mural R.J."/>
            <person name="Istrail S."/>
            <person name="Sutton G.G."/>
            <person name="Florea L."/>
            <person name="Halpern A.L."/>
            <person name="Mobarry C.M."/>
            <person name="Lippert R."/>
            <person name="Walenz B."/>
            <person name="Shatkay H."/>
            <person name="Dew I."/>
            <person name="Miller J.R."/>
            <person name="Flanigan M.J."/>
            <person name="Edwards N.J."/>
            <person name="Bolanos R."/>
            <person name="Fasulo D."/>
            <person name="Halldorsson B.V."/>
            <person name="Hannenhalli S."/>
            <person name="Turner R."/>
            <person name="Yooseph S."/>
            <person name="Lu F."/>
            <person name="Nusskern D.R."/>
            <person name="Shue B.C."/>
            <person name="Zheng X.H."/>
            <person name="Zhong F."/>
            <person name="Delcher A.L."/>
            <person name="Huson D.H."/>
            <person name="Kravitz S.A."/>
            <person name="Mouchard L."/>
            <person name="Reinert K."/>
            <person name="Remington K.A."/>
            <person name="Clark A.G."/>
            <person name="Waterman M.S."/>
            <person name="Eichler E.E."/>
            <person name="Adams M.D."/>
            <person name="Hunkapiller M.W."/>
            <person name="Myers E.W."/>
            <person name="Venter J.C."/>
        </authorList>
    </citation>
    <scope>NUCLEOTIDE SEQUENCE [LARGE SCALE GENOMIC DNA]</scope>
</reference>
<reference evidence="8" key="5">
    <citation type="journal article" date="2004" name="Genome Res.">
        <title>The status, quality, and expansion of the NIH full-length cDNA project: the Mammalian Gene Collection (MGC).</title>
        <authorList>
            <consortium name="The MGC Project Team"/>
        </authorList>
    </citation>
    <scope>NUCLEOTIDE SEQUENCE [LARGE SCALE MRNA]</scope>
    <source>
        <tissue evidence="8">Brain</tissue>
    </source>
</reference>
<reference key="6">
    <citation type="journal article" date="2007" name="Nature">
        <title>Patterns of somatic mutation in human cancer genomes.</title>
        <authorList>
            <person name="Greenman C."/>
            <person name="Stephens P."/>
            <person name="Smith R."/>
            <person name="Dalgliesh G.L."/>
            <person name="Hunter C."/>
            <person name="Bignell G."/>
            <person name="Davies H."/>
            <person name="Teague J."/>
            <person name="Butler A."/>
            <person name="Stevens C."/>
            <person name="Edkins S."/>
            <person name="O'Meara S."/>
            <person name="Vastrik I."/>
            <person name="Schmidt E.E."/>
            <person name="Avis T."/>
            <person name="Barthorpe S."/>
            <person name="Bhamra G."/>
            <person name="Buck G."/>
            <person name="Choudhury B."/>
            <person name="Clements J."/>
            <person name="Cole J."/>
            <person name="Dicks E."/>
            <person name="Forbes S."/>
            <person name="Gray K."/>
            <person name="Halliday K."/>
            <person name="Harrison R."/>
            <person name="Hills K."/>
            <person name="Hinton J."/>
            <person name="Jenkinson A."/>
            <person name="Jones D."/>
            <person name="Menzies A."/>
            <person name="Mironenko T."/>
            <person name="Perry J."/>
            <person name="Raine K."/>
            <person name="Richardson D."/>
            <person name="Shepherd R."/>
            <person name="Small A."/>
            <person name="Tofts C."/>
            <person name="Varian J."/>
            <person name="Webb T."/>
            <person name="West S."/>
            <person name="Widaa S."/>
            <person name="Yates A."/>
            <person name="Cahill D.P."/>
            <person name="Louis D.N."/>
            <person name="Goldstraw P."/>
            <person name="Nicholson A.G."/>
            <person name="Brasseur F."/>
            <person name="Looijenga L."/>
            <person name="Weber B.L."/>
            <person name="Chiew Y.-E."/>
            <person name="DeFazio A."/>
            <person name="Greaves M.F."/>
            <person name="Green A.R."/>
            <person name="Campbell P."/>
            <person name="Birney E."/>
            <person name="Easton D.F."/>
            <person name="Chenevix-Trench G."/>
            <person name="Tan M.-H."/>
            <person name="Khoo S.K."/>
            <person name="Teh B.T."/>
            <person name="Yuen S.T."/>
            <person name="Leung S.Y."/>
            <person name="Wooster R."/>
            <person name="Futreal P.A."/>
            <person name="Stratton M.R."/>
        </authorList>
    </citation>
    <scope>VARIANTS [LARGE SCALE ANALYSIS] TRP-21; GLN-64; ILE-260; ILE-320; SER-333 AND THR-411</scope>
</reference>
<organism>
    <name type="scientific">Homo sapiens</name>
    <name type="common">Human</name>
    <dbReference type="NCBI Taxonomy" id="9606"/>
    <lineage>
        <taxon>Eukaryota</taxon>
        <taxon>Metazoa</taxon>
        <taxon>Chordata</taxon>
        <taxon>Craniata</taxon>
        <taxon>Vertebrata</taxon>
        <taxon>Euteleostomi</taxon>
        <taxon>Mammalia</taxon>
        <taxon>Eutheria</taxon>
        <taxon>Euarchontoglires</taxon>
        <taxon>Primates</taxon>
        <taxon>Haplorrhini</taxon>
        <taxon>Catarrhini</taxon>
        <taxon>Hominidae</taxon>
        <taxon>Homo</taxon>
    </lineage>
</organism>
<feature type="chain" id="PRO_0000247666" description="Serine/threonine-protein kinase NIM1">
    <location>
        <begin position="1"/>
        <end position="436"/>
    </location>
</feature>
<feature type="domain" description="Protein kinase" evidence="2">
    <location>
        <begin position="74"/>
        <end position="325"/>
    </location>
</feature>
<feature type="region of interest" description="Disordered" evidence="4">
    <location>
        <begin position="23"/>
        <end position="55"/>
    </location>
</feature>
<feature type="active site" description="Proton acceptor" evidence="1 2 3">
    <location>
        <position position="196"/>
    </location>
</feature>
<feature type="binding site" evidence="1 2">
    <location>
        <begin position="80"/>
        <end position="88"/>
    </location>
    <ligand>
        <name>ATP</name>
        <dbReference type="ChEBI" id="CHEBI:30616"/>
    </ligand>
</feature>
<feature type="binding site" evidence="1 2">
    <location>
        <position position="103"/>
    </location>
    <ligand>
        <name>ATP</name>
        <dbReference type="ChEBI" id="CHEBI:30616"/>
    </ligand>
</feature>
<feature type="modified residue" description="Phosphothreonine; by autocatalysis" evidence="5">
    <location>
        <position position="229"/>
    </location>
</feature>
<feature type="sequence variant" id="VAR_040945" description="In dbSNP:rs55664335." evidence="6">
    <original>R</original>
    <variation>W</variation>
    <location>
        <position position="21"/>
    </location>
</feature>
<feature type="sequence variant" id="VAR_040946" description="In dbSNP:rs55663207." evidence="6">
    <original>E</original>
    <variation>Q</variation>
    <location>
        <position position="64"/>
    </location>
</feature>
<feature type="sequence variant" id="VAR_040947" description="In dbSNP:rs35659008." evidence="6">
    <original>L</original>
    <variation>I</variation>
    <location>
        <position position="260"/>
    </location>
</feature>
<feature type="sequence variant" id="VAR_040948" description="In dbSNP:rs55770078." evidence="6">
    <original>M</original>
    <variation>I</variation>
    <location>
        <position position="320"/>
    </location>
</feature>
<feature type="sequence variant" id="VAR_040949" description="In a lung neuroendocrine carcinoma sample; somatic mutation; dbSNP:rs866026698." evidence="6">
    <original>P</original>
    <variation>S</variation>
    <location>
        <position position="333"/>
    </location>
</feature>
<feature type="sequence variant" id="VAR_040950" description="In a lung large cell carcinoma sample; somatic mutation." evidence="6">
    <original>P</original>
    <variation>T</variation>
    <location>
        <position position="411"/>
    </location>
</feature>
<feature type="mutagenesis site" description="Loss of autophosphorylation and kinase activity." evidence="5">
    <original>T</original>
    <variation>A</variation>
    <location>
        <position position="229"/>
    </location>
</feature>
<feature type="mutagenesis site" description="Constitutively active." evidence="5">
    <original>T</original>
    <variation>E</variation>
    <location>
        <position position="229"/>
    </location>
</feature>
<accession>Q8IY84</accession>
<accession>B3KVM1</accession>
<sequence length="436" mass="49606">MTAVYMNGGGLVNPHYARWDRRDSVESGCQTESSKEGEEGQPRQLTPFEKLTQDMSQDEKVVREITLGKRIGFYRIRGEIGSGNFSQVKLGIHSLTKEKVAIKILDKTKLDQKTQRLLSREISSMEKLHHPNIIRLYEVVETLSKLHLVMEYAGGGELFGKISTEGKLSEPESKLIFSQIVSAVKHMHENQIIHRDLKAENVFYTSNTCVKVGDFGFSTVSKKGEMLNTFCGSPPYAAPELFRDEHYIGIYVDIWALGVLLYFMVTGTMPFRAETVAKLKKSILEGTYSVPPHVSEPCHRLIRGVLQQIPTERYGIDCIMNDEWMQGVPYPTPLEPFQLDPKHLSETSTLKEEENEVKSTLEHLGITEEHIRNNQGRDARSSITGVYRIILHRVQRKKALESVPVMMLPDPKERDLKKGSRVYRGIRHTSKFCSIL</sequence>
<name>NIM1_HUMAN</name>
<proteinExistence type="evidence at protein level"/>